<protein>
    <recommendedName>
        <fullName evidence="1">Large ribosomal subunit protein bL34</fullName>
    </recommendedName>
    <alternativeName>
        <fullName evidence="2">50S ribosomal protein L34</fullName>
    </alternativeName>
</protein>
<keyword id="KW-0687">Ribonucleoprotein</keyword>
<keyword id="KW-0689">Ribosomal protein</keyword>
<reference key="1">
    <citation type="journal article" date="2008" name="Genome Res.">
        <title>Comparative genome analysis of Salmonella enteritidis PT4 and Salmonella gallinarum 287/91 provides insights into evolutionary and host adaptation pathways.</title>
        <authorList>
            <person name="Thomson N.R."/>
            <person name="Clayton D.J."/>
            <person name="Windhorst D."/>
            <person name="Vernikos G."/>
            <person name="Davidson S."/>
            <person name="Churcher C."/>
            <person name="Quail M.A."/>
            <person name="Stevens M."/>
            <person name="Jones M.A."/>
            <person name="Watson M."/>
            <person name="Barron A."/>
            <person name="Layton A."/>
            <person name="Pickard D."/>
            <person name="Kingsley R.A."/>
            <person name="Bignell A."/>
            <person name="Clark L."/>
            <person name="Harris B."/>
            <person name="Ormond D."/>
            <person name="Abdellah Z."/>
            <person name="Brooks K."/>
            <person name="Cherevach I."/>
            <person name="Chillingworth T."/>
            <person name="Woodward J."/>
            <person name="Norberczak H."/>
            <person name="Lord A."/>
            <person name="Arrowsmith C."/>
            <person name="Jagels K."/>
            <person name="Moule S."/>
            <person name="Mungall K."/>
            <person name="Saunders M."/>
            <person name="Whitehead S."/>
            <person name="Chabalgoity J.A."/>
            <person name="Maskell D."/>
            <person name="Humphreys T."/>
            <person name="Roberts M."/>
            <person name="Barrow P.A."/>
            <person name="Dougan G."/>
            <person name="Parkhill J."/>
        </authorList>
    </citation>
    <scope>NUCLEOTIDE SEQUENCE [LARGE SCALE GENOMIC DNA]</scope>
    <source>
        <strain>287/91 / NCTC 13346</strain>
    </source>
</reference>
<gene>
    <name evidence="1" type="primary">rpmH</name>
    <name type="ordered locus">SG3592</name>
</gene>
<comment type="similarity">
    <text evidence="1">Belongs to the bacterial ribosomal protein bL34 family.</text>
</comment>
<feature type="chain" id="PRO_1000196102" description="Large ribosomal subunit protein bL34">
    <location>
        <begin position="1"/>
        <end position="46"/>
    </location>
</feature>
<sequence>MKRTFQPSVLKRNRSHGFRARMATKNGRQVLARRRAKGRARLTVSK</sequence>
<name>RL34_SALG2</name>
<organism>
    <name type="scientific">Salmonella gallinarum (strain 287/91 / NCTC 13346)</name>
    <dbReference type="NCBI Taxonomy" id="550538"/>
    <lineage>
        <taxon>Bacteria</taxon>
        <taxon>Pseudomonadati</taxon>
        <taxon>Pseudomonadota</taxon>
        <taxon>Gammaproteobacteria</taxon>
        <taxon>Enterobacterales</taxon>
        <taxon>Enterobacteriaceae</taxon>
        <taxon>Salmonella</taxon>
    </lineage>
</organism>
<dbReference type="EMBL" id="AM933173">
    <property type="protein sequence ID" value="CAR39380.1"/>
    <property type="molecule type" value="Genomic_DNA"/>
</dbReference>
<dbReference type="RefSeq" id="WP_000831330.1">
    <property type="nucleotide sequence ID" value="NC_011274.1"/>
</dbReference>
<dbReference type="SMR" id="B5RFY6"/>
<dbReference type="GeneID" id="98190980"/>
<dbReference type="KEGG" id="seg:SG3592"/>
<dbReference type="HOGENOM" id="CLU_129938_2_1_6"/>
<dbReference type="Proteomes" id="UP000008321">
    <property type="component" value="Chromosome"/>
</dbReference>
<dbReference type="GO" id="GO:1990904">
    <property type="term" value="C:ribonucleoprotein complex"/>
    <property type="evidence" value="ECO:0007669"/>
    <property type="project" value="UniProtKB-KW"/>
</dbReference>
<dbReference type="GO" id="GO:0005840">
    <property type="term" value="C:ribosome"/>
    <property type="evidence" value="ECO:0007669"/>
    <property type="project" value="UniProtKB-KW"/>
</dbReference>
<dbReference type="GO" id="GO:0003735">
    <property type="term" value="F:structural constituent of ribosome"/>
    <property type="evidence" value="ECO:0007669"/>
    <property type="project" value="InterPro"/>
</dbReference>
<dbReference type="GO" id="GO:0006412">
    <property type="term" value="P:translation"/>
    <property type="evidence" value="ECO:0007669"/>
    <property type="project" value="UniProtKB-UniRule"/>
</dbReference>
<dbReference type="FunFam" id="1.10.287.3980:FF:000001">
    <property type="entry name" value="Mitochondrial ribosomal protein L34"/>
    <property type="match status" value="1"/>
</dbReference>
<dbReference type="Gene3D" id="1.10.287.3980">
    <property type="match status" value="1"/>
</dbReference>
<dbReference type="HAMAP" id="MF_00391">
    <property type="entry name" value="Ribosomal_bL34"/>
    <property type="match status" value="1"/>
</dbReference>
<dbReference type="InterPro" id="IPR000271">
    <property type="entry name" value="Ribosomal_bL34"/>
</dbReference>
<dbReference type="InterPro" id="IPR020939">
    <property type="entry name" value="Ribosomal_bL34_CS"/>
</dbReference>
<dbReference type="NCBIfam" id="TIGR01030">
    <property type="entry name" value="rpmH_bact"/>
    <property type="match status" value="1"/>
</dbReference>
<dbReference type="PANTHER" id="PTHR14503:SF4">
    <property type="entry name" value="LARGE RIBOSOMAL SUBUNIT PROTEIN BL34M"/>
    <property type="match status" value="1"/>
</dbReference>
<dbReference type="PANTHER" id="PTHR14503">
    <property type="entry name" value="MITOCHONDRIAL RIBOSOMAL PROTEIN 34 FAMILY MEMBER"/>
    <property type="match status" value="1"/>
</dbReference>
<dbReference type="Pfam" id="PF00468">
    <property type="entry name" value="Ribosomal_L34"/>
    <property type="match status" value="1"/>
</dbReference>
<dbReference type="PROSITE" id="PS00784">
    <property type="entry name" value="RIBOSOMAL_L34"/>
    <property type="match status" value="1"/>
</dbReference>
<accession>B5RFY6</accession>
<evidence type="ECO:0000255" key="1">
    <source>
        <dbReference type="HAMAP-Rule" id="MF_00391"/>
    </source>
</evidence>
<evidence type="ECO:0000305" key="2"/>
<proteinExistence type="inferred from homology"/>